<accession>Q4R9A9</accession>
<gene>
    <name type="primary">CSNK1G1</name>
    <name type="ORF">QtsA-10381</name>
</gene>
<proteinExistence type="evidence at transcript level"/>
<organism>
    <name type="scientific">Macaca fascicularis</name>
    <name type="common">Crab-eating macaque</name>
    <name type="synonym">Cynomolgus monkey</name>
    <dbReference type="NCBI Taxonomy" id="9541"/>
    <lineage>
        <taxon>Eukaryota</taxon>
        <taxon>Metazoa</taxon>
        <taxon>Chordata</taxon>
        <taxon>Craniata</taxon>
        <taxon>Vertebrata</taxon>
        <taxon>Euteleostomi</taxon>
        <taxon>Mammalia</taxon>
        <taxon>Eutheria</taxon>
        <taxon>Euarchontoglires</taxon>
        <taxon>Primates</taxon>
        <taxon>Haplorrhini</taxon>
        <taxon>Catarrhini</taxon>
        <taxon>Cercopithecidae</taxon>
        <taxon>Cercopithecinae</taxon>
        <taxon>Macaca</taxon>
    </lineage>
</organism>
<dbReference type="EC" id="2.7.11.1"/>
<dbReference type="EMBL" id="AB168187">
    <property type="protein sequence ID" value="BAE00312.1"/>
    <property type="molecule type" value="mRNA"/>
</dbReference>
<dbReference type="SMR" id="Q4R9A9"/>
<dbReference type="STRING" id="9541.ENSMFAP00000005479"/>
<dbReference type="Ensembl" id="ENSMFAT00000024162.2">
    <property type="protein sequence ID" value="ENSMFAP00000005485.2"/>
    <property type="gene ID" value="ENSMFAG00000002355.2"/>
</dbReference>
<dbReference type="eggNOG" id="KOG1165">
    <property type="taxonomic scope" value="Eukaryota"/>
</dbReference>
<dbReference type="GeneTree" id="ENSGT00940000155628"/>
<dbReference type="OrthoDB" id="5800476at2759"/>
<dbReference type="Proteomes" id="UP000233100">
    <property type="component" value="Chromosome 7"/>
</dbReference>
<dbReference type="Bgee" id="ENSMFAG00000002355">
    <property type="expression patterns" value="Expressed in thymus and 13 other cell types or tissues"/>
</dbReference>
<dbReference type="GO" id="GO:0005737">
    <property type="term" value="C:cytoplasm"/>
    <property type="evidence" value="ECO:0007669"/>
    <property type="project" value="UniProtKB-SubCell"/>
</dbReference>
<dbReference type="GO" id="GO:0005524">
    <property type="term" value="F:ATP binding"/>
    <property type="evidence" value="ECO:0007669"/>
    <property type="project" value="UniProtKB-KW"/>
</dbReference>
<dbReference type="GO" id="GO:0106310">
    <property type="term" value="F:protein serine kinase activity"/>
    <property type="evidence" value="ECO:0007669"/>
    <property type="project" value="RHEA"/>
</dbReference>
<dbReference type="GO" id="GO:0004674">
    <property type="term" value="F:protein serine/threonine kinase activity"/>
    <property type="evidence" value="ECO:0007669"/>
    <property type="project" value="UniProtKB-KW"/>
</dbReference>
<dbReference type="GO" id="GO:0016055">
    <property type="term" value="P:Wnt signaling pathway"/>
    <property type="evidence" value="ECO:0007669"/>
    <property type="project" value="UniProtKB-KW"/>
</dbReference>
<dbReference type="CDD" id="cd14126">
    <property type="entry name" value="STKc_CK1_gamma"/>
    <property type="match status" value="1"/>
</dbReference>
<dbReference type="FunFam" id="1.10.510.10:FF:001113">
    <property type="entry name" value="Casein kinase 1 gamma 2"/>
    <property type="match status" value="1"/>
</dbReference>
<dbReference type="FunFam" id="3.30.200.20:FF:000018">
    <property type="entry name" value="Casein kinase I isoform gamma-1"/>
    <property type="match status" value="1"/>
</dbReference>
<dbReference type="Gene3D" id="3.30.200.20">
    <property type="entry name" value="Phosphorylase Kinase, domain 1"/>
    <property type="match status" value="1"/>
</dbReference>
<dbReference type="Gene3D" id="1.10.510.10">
    <property type="entry name" value="Transferase(Phosphotransferase) domain 1"/>
    <property type="match status" value="1"/>
</dbReference>
<dbReference type="InterPro" id="IPR022247">
    <property type="entry name" value="Casein_kinase-1_gamma_C"/>
</dbReference>
<dbReference type="InterPro" id="IPR050235">
    <property type="entry name" value="CK1_Ser-Thr_kinase"/>
</dbReference>
<dbReference type="InterPro" id="IPR011009">
    <property type="entry name" value="Kinase-like_dom_sf"/>
</dbReference>
<dbReference type="InterPro" id="IPR000719">
    <property type="entry name" value="Prot_kinase_dom"/>
</dbReference>
<dbReference type="InterPro" id="IPR017441">
    <property type="entry name" value="Protein_kinase_ATP_BS"/>
</dbReference>
<dbReference type="InterPro" id="IPR008271">
    <property type="entry name" value="Ser/Thr_kinase_AS"/>
</dbReference>
<dbReference type="PANTHER" id="PTHR11909">
    <property type="entry name" value="CASEIN KINASE-RELATED"/>
    <property type="match status" value="1"/>
</dbReference>
<dbReference type="Pfam" id="PF12605">
    <property type="entry name" value="CK1gamma_C"/>
    <property type="match status" value="1"/>
</dbReference>
<dbReference type="Pfam" id="PF00069">
    <property type="entry name" value="Pkinase"/>
    <property type="match status" value="1"/>
</dbReference>
<dbReference type="SMART" id="SM00220">
    <property type="entry name" value="S_TKc"/>
    <property type="match status" value="1"/>
</dbReference>
<dbReference type="SUPFAM" id="SSF56112">
    <property type="entry name" value="Protein kinase-like (PK-like)"/>
    <property type="match status" value="1"/>
</dbReference>
<dbReference type="PROSITE" id="PS00107">
    <property type="entry name" value="PROTEIN_KINASE_ATP"/>
    <property type="match status" value="1"/>
</dbReference>
<dbReference type="PROSITE" id="PS50011">
    <property type="entry name" value="PROTEIN_KINASE_DOM"/>
    <property type="match status" value="1"/>
</dbReference>
<dbReference type="PROSITE" id="PS00108">
    <property type="entry name" value="PROTEIN_KINASE_ST"/>
    <property type="match status" value="1"/>
</dbReference>
<feature type="chain" id="PRO_0000364342" description="Casein kinase I isoform gamma-1">
    <location>
        <begin position="1"/>
        <end position="381"/>
    </location>
</feature>
<feature type="domain" description="Protein kinase" evidence="3">
    <location>
        <begin position="44"/>
        <end position="315"/>
    </location>
</feature>
<feature type="region of interest" description="Disordered" evidence="5">
    <location>
        <begin position="1"/>
        <end position="36"/>
    </location>
</feature>
<feature type="region of interest" description="Disordered" evidence="5">
    <location>
        <begin position="351"/>
        <end position="381"/>
    </location>
</feature>
<feature type="compositionally biased region" description="Basic and acidic residues" evidence="5">
    <location>
        <begin position="1"/>
        <end position="13"/>
    </location>
</feature>
<feature type="compositionally biased region" description="Basic and acidic residues" evidence="5">
    <location>
        <begin position="351"/>
        <end position="360"/>
    </location>
</feature>
<feature type="compositionally biased region" description="Low complexity" evidence="5">
    <location>
        <begin position="368"/>
        <end position="381"/>
    </location>
</feature>
<feature type="active site" description="Proton acceptor" evidence="3 4">
    <location>
        <position position="164"/>
    </location>
</feature>
<feature type="binding site" evidence="3">
    <location>
        <begin position="50"/>
        <end position="58"/>
    </location>
    <ligand>
        <name>ATP</name>
        <dbReference type="ChEBI" id="CHEBI:30616"/>
    </ligand>
</feature>
<feature type="binding site" evidence="3">
    <location>
        <position position="73"/>
    </location>
    <ligand>
        <name>ATP</name>
        <dbReference type="ChEBI" id="CHEBI:30616"/>
    </ligand>
</feature>
<feature type="modified residue" description="Phosphoserine" evidence="2">
    <location>
        <position position="344"/>
    </location>
</feature>
<comment type="function">
    <text evidence="1">Serine/threonine-protein kinase. Casein kinases are operationally defined by their preferential utilization of acidic proteins such as caseins as substrates. It can phosphorylate a large number of proteins. Participates in Wnt signaling. Regulates fast synaptic transmission mediated by glutamate. Phosphorylates CLSPN (By similarity).</text>
</comment>
<comment type="catalytic activity">
    <reaction>
        <text>L-seryl-[protein] + ATP = O-phospho-L-seryl-[protein] + ADP + H(+)</text>
        <dbReference type="Rhea" id="RHEA:17989"/>
        <dbReference type="Rhea" id="RHEA-COMP:9863"/>
        <dbReference type="Rhea" id="RHEA-COMP:11604"/>
        <dbReference type="ChEBI" id="CHEBI:15378"/>
        <dbReference type="ChEBI" id="CHEBI:29999"/>
        <dbReference type="ChEBI" id="CHEBI:30616"/>
        <dbReference type="ChEBI" id="CHEBI:83421"/>
        <dbReference type="ChEBI" id="CHEBI:456216"/>
        <dbReference type="EC" id="2.7.11.1"/>
    </reaction>
</comment>
<comment type="catalytic activity">
    <reaction>
        <text>L-threonyl-[protein] + ATP = O-phospho-L-threonyl-[protein] + ADP + H(+)</text>
        <dbReference type="Rhea" id="RHEA:46608"/>
        <dbReference type="Rhea" id="RHEA-COMP:11060"/>
        <dbReference type="Rhea" id="RHEA-COMP:11605"/>
        <dbReference type="ChEBI" id="CHEBI:15378"/>
        <dbReference type="ChEBI" id="CHEBI:30013"/>
        <dbReference type="ChEBI" id="CHEBI:30616"/>
        <dbReference type="ChEBI" id="CHEBI:61977"/>
        <dbReference type="ChEBI" id="CHEBI:456216"/>
        <dbReference type="EC" id="2.7.11.1"/>
    </reaction>
</comment>
<comment type="subunit">
    <text evidence="1">Monomer.</text>
</comment>
<comment type="subcellular location">
    <subcellularLocation>
        <location evidence="1">Cytoplasm</location>
    </subcellularLocation>
</comment>
<comment type="PTM">
    <text evidence="1">Autophosphorylated.</text>
</comment>
<comment type="similarity">
    <text evidence="6">Belongs to the protein kinase superfamily. CK1 Ser/Thr protein kinase family. Casein kinase I subfamily.</text>
</comment>
<evidence type="ECO:0000250" key="1"/>
<evidence type="ECO:0000250" key="2">
    <source>
        <dbReference type="UniProtKB" id="Q9HCP0"/>
    </source>
</evidence>
<evidence type="ECO:0000255" key="3">
    <source>
        <dbReference type="PROSITE-ProRule" id="PRU00159"/>
    </source>
</evidence>
<evidence type="ECO:0000255" key="4">
    <source>
        <dbReference type="PROSITE-ProRule" id="PRU10027"/>
    </source>
</evidence>
<evidence type="ECO:0000256" key="5">
    <source>
        <dbReference type="SAM" id="MobiDB-lite"/>
    </source>
</evidence>
<evidence type="ECO:0000305" key="6"/>
<protein>
    <recommendedName>
        <fullName>Casein kinase I isoform gamma-1</fullName>
        <shortName>CKI-gamma 1</shortName>
        <ecNumber>2.7.11.1</ecNumber>
    </recommendedName>
</protein>
<keyword id="KW-0067">ATP-binding</keyword>
<keyword id="KW-0963">Cytoplasm</keyword>
<keyword id="KW-0418">Kinase</keyword>
<keyword id="KW-0547">Nucleotide-binding</keyword>
<keyword id="KW-0597">Phosphoprotein</keyword>
<keyword id="KW-1185">Reference proteome</keyword>
<keyword id="KW-0723">Serine/threonine-protein kinase</keyword>
<keyword id="KW-0808">Transferase</keyword>
<keyword id="KW-0879">Wnt signaling pathway</keyword>
<sequence length="381" mass="43986">MDHPSREKDERQRTTKPMAQRSAHCSRPSGSSSSSGVLMVGPNFRVGKKIGCGNFGELRLGKNLYTNEYVAIKLEPIKSRAPQLHLEYRFYKQLGSAGEGLPQVYYFGPCGKYNAMVLELLGPSLEDLFDLCDRTFTLKTVLMIAIQLLSRMEYVHSKNLIYRDVKPENFLIGRQGNKKEHVIHIIDFGLAKEYIDPETKKHIPYREHKSLTGTARYMSINTHLGKEQSRRDDLEALGHMFMYFLRGSLPWQGLKADTLKERYQKIGDTKRNTPIEALCENFPEEMATYLRYVRRLDFFEKPDYEYLRTLFTDLFEKKGYTFDYAYDWVGRPIPTPVGSVHVDSGASAITRESHTHRDRPSQQQPLRNQFSSSTNQTSNLK</sequence>
<reference key="1">
    <citation type="submission" date="2005-06" db="EMBL/GenBank/DDBJ databases">
        <title>DNA sequences of macaque genes expressed in brain or testis and its evolutionary implications.</title>
        <authorList>
            <consortium name="International consortium for macaque cDNA sequencing and analysis"/>
        </authorList>
    </citation>
    <scope>NUCLEOTIDE SEQUENCE [LARGE SCALE MRNA]</scope>
    <source>
        <tissue>Testis</tissue>
    </source>
</reference>
<name>KC1G1_MACFA</name>